<gene>
    <name type="primary">Gab1</name>
</gene>
<feature type="initiator methionine" description="Removed" evidence="2">
    <location>
        <position position="1"/>
    </location>
</feature>
<feature type="chain" id="PRO_0000050284" description="GRB2-associated-binding protein 1">
    <location>
        <begin position="2"/>
        <end position="695"/>
    </location>
</feature>
<feature type="domain" description="PH" evidence="3">
    <location>
        <begin position="5"/>
        <end position="116"/>
    </location>
</feature>
<feature type="region of interest" description="Disordered" evidence="4">
    <location>
        <begin position="204"/>
        <end position="229"/>
    </location>
</feature>
<feature type="region of interest" description="Disordered" evidence="4">
    <location>
        <begin position="306"/>
        <end position="387"/>
    </location>
</feature>
<feature type="region of interest" description="Disordered" evidence="4">
    <location>
        <begin position="453"/>
        <end position="659"/>
    </location>
</feature>
<feature type="region of interest" description="Disordered" evidence="4">
    <location>
        <begin position="671"/>
        <end position="695"/>
    </location>
</feature>
<feature type="compositionally biased region" description="Polar residues" evidence="4">
    <location>
        <begin position="206"/>
        <end position="229"/>
    </location>
</feature>
<feature type="compositionally biased region" description="Polar residues" evidence="4">
    <location>
        <begin position="314"/>
        <end position="334"/>
    </location>
</feature>
<feature type="compositionally biased region" description="Polar residues" evidence="4">
    <location>
        <begin position="457"/>
        <end position="466"/>
    </location>
</feature>
<feature type="compositionally biased region" description="Polar residues" evidence="4">
    <location>
        <begin position="605"/>
        <end position="617"/>
    </location>
</feature>
<feature type="compositionally biased region" description="Basic and acidic residues" evidence="4">
    <location>
        <begin position="673"/>
        <end position="685"/>
    </location>
</feature>
<feature type="compositionally biased region" description="Polar residues" evidence="4">
    <location>
        <begin position="686"/>
        <end position="695"/>
    </location>
</feature>
<feature type="modified residue" description="N-acetylserine" evidence="2">
    <location>
        <position position="2"/>
    </location>
</feature>
<feature type="modified residue" description="Phosphoserine" evidence="2">
    <location>
        <position position="251"/>
    </location>
</feature>
<feature type="modified residue" description="Phosphoserine" evidence="2">
    <location>
        <position position="253"/>
    </location>
</feature>
<feature type="modified residue" description="Phosphoserine" evidence="2">
    <location>
        <position position="266"/>
    </location>
</feature>
<feature type="modified residue" description="Phosphoserine" evidence="2">
    <location>
        <position position="304"/>
    </location>
</feature>
<feature type="modified residue" description="Phosphothreonine" evidence="2">
    <location>
        <position position="388"/>
    </location>
</feature>
<feature type="modified residue" description="Phosphoserine" evidence="2">
    <location>
        <position position="403"/>
    </location>
</feature>
<feature type="modified residue" description="Phosphoserine" evidence="8">
    <location>
        <position position="455"/>
    </location>
</feature>
<feature type="modified residue" description="Phosphotyrosine" evidence="2">
    <location>
        <position position="628"/>
    </location>
</feature>
<feature type="modified residue" description="Phosphothreonine" evidence="2">
    <location>
        <position position="639"/>
    </location>
</feature>
<feature type="modified residue" description="Phosphoserine" evidence="2">
    <location>
        <position position="652"/>
    </location>
</feature>
<feature type="modified residue" description="Phosphotyrosine" evidence="2">
    <location>
        <position position="660"/>
    </location>
</feature>
<feature type="modified residue" description="Phosphoserine" evidence="2">
    <location>
        <position position="684"/>
    </location>
</feature>
<feature type="sequence conflict" description="In Ref. 1; CAB59832." evidence="7" ref="1">
    <original>F</original>
    <variation>L</variation>
    <location>
        <position position="236"/>
    </location>
</feature>
<feature type="sequence conflict" description="In Ref. 1; CAB59832." evidence="7" ref="1">
    <original>T</original>
    <variation>S</variation>
    <location>
        <position position="351"/>
    </location>
</feature>
<feature type="sequence conflict" description="In Ref. 1; CAB59832." evidence="7" ref="1">
    <original>A</original>
    <variation>V</variation>
    <location>
        <position position="379"/>
    </location>
</feature>
<dbReference type="EMBL" id="AJ250669">
    <property type="protein sequence ID" value="CAB59832.1"/>
    <property type="molecule type" value="mRNA"/>
</dbReference>
<dbReference type="EMBL" id="BC007483">
    <property type="protein sequence ID" value="AAH07483.1"/>
    <property type="molecule type" value="mRNA"/>
</dbReference>
<dbReference type="CCDS" id="CCDS22443.1"/>
<dbReference type="RefSeq" id="NP_067331.2">
    <property type="nucleotide sequence ID" value="NM_021356.2"/>
</dbReference>
<dbReference type="SMR" id="Q9QYY0"/>
<dbReference type="BioGRID" id="199793">
    <property type="interactions" value="19"/>
</dbReference>
<dbReference type="DIP" id="DIP-39377N"/>
<dbReference type="FunCoup" id="Q9QYY0">
    <property type="interactions" value="2049"/>
</dbReference>
<dbReference type="IntAct" id="Q9QYY0">
    <property type="interactions" value="11"/>
</dbReference>
<dbReference type="MINT" id="Q9QYY0"/>
<dbReference type="STRING" id="10090.ENSMUSP00000147784"/>
<dbReference type="GlyGen" id="Q9QYY0">
    <property type="glycosylation" value="6 sites, 1 O-linked glycan (5 sites)"/>
</dbReference>
<dbReference type="iPTMnet" id="Q9QYY0"/>
<dbReference type="PhosphoSitePlus" id="Q9QYY0"/>
<dbReference type="PaxDb" id="10090-ENSMUSP00000034150"/>
<dbReference type="ProteomicsDB" id="268834"/>
<dbReference type="Pumba" id="Q9QYY0"/>
<dbReference type="Antibodypedia" id="3614">
    <property type="antibodies" value="369 antibodies from 42 providers"/>
</dbReference>
<dbReference type="DNASU" id="14388"/>
<dbReference type="Ensembl" id="ENSMUST00000034150.10">
    <property type="protein sequence ID" value="ENSMUSP00000034150.9"/>
    <property type="gene ID" value="ENSMUSG00000031714.11"/>
</dbReference>
<dbReference type="GeneID" id="14388"/>
<dbReference type="KEGG" id="mmu:14388"/>
<dbReference type="UCSC" id="uc009mjb.2">
    <property type="organism name" value="mouse"/>
</dbReference>
<dbReference type="AGR" id="MGI:108088"/>
<dbReference type="CTD" id="2549"/>
<dbReference type="MGI" id="MGI:108088">
    <property type="gene designation" value="Gab1"/>
</dbReference>
<dbReference type="VEuPathDB" id="HostDB:ENSMUSG00000031714"/>
<dbReference type="eggNOG" id="KOG3751">
    <property type="taxonomic scope" value="Eukaryota"/>
</dbReference>
<dbReference type="GeneTree" id="ENSGT00940000156801"/>
<dbReference type="HOGENOM" id="CLU_028652_0_0_1"/>
<dbReference type="InParanoid" id="Q9QYY0"/>
<dbReference type="OrthoDB" id="67516at2759"/>
<dbReference type="PhylomeDB" id="Q9QYY0"/>
<dbReference type="TreeFam" id="TF329487"/>
<dbReference type="Reactome" id="R-MMU-109704">
    <property type="pathway name" value="PI3K Cascade"/>
</dbReference>
<dbReference type="Reactome" id="R-MMU-1257604">
    <property type="pathway name" value="PIP3 activates AKT signaling"/>
</dbReference>
<dbReference type="Reactome" id="R-MMU-180292">
    <property type="pathway name" value="GAB1 signalosome"/>
</dbReference>
<dbReference type="Reactome" id="R-MMU-1963642">
    <property type="pathway name" value="PI3K events in ERBB2 signaling"/>
</dbReference>
<dbReference type="Reactome" id="R-MMU-5654689">
    <property type="pathway name" value="PI-3K cascade:FGFR1"/>
</dbReference>
<dbReference type="Reactome" id="R-MMU-5654695">
    <property type="pathway name" value="PI-3K cascade:FGFR2"/>
</dbReference>
<dbReference type="Reactome" id="R-MMU-5654710">
    <property type="pathway name" value="PI-3K cascade:FGFR3"/>
</dbReference>
<dbReference type="Reactome" id="R-MMU-5654720">
    <property type="pathway name" value="PI-3K cascade:FGFR4"/>
</dbReference>
<dbReference type="Reactome" id="R-MMU-6811558">
    <property type="pathway name" value="PI5P, PP2A and IER3 Regulate PI3K/AKT Signaling"/>
</dbReference>
<dbReference type="Reactome" id="R-MMU-8851907">
    <property type="pathway name" value="MET activates PI3K/AKT signaling"/>
</dbReference>
<dbReference type="Reactome" id="R-MMU-8853659">
    <property type="pathway name" value="RET signaling"/>
</dbReference>
<dbReference type="Reactome" id="R-MMU-8865999">
    <property type="pathway name" value="MET activates PTPN11"/>
</dbReference>
<dbReference type="Reactome" id="R-MMU-8875555">
    <property type="pathway name" value="MET activates RAP1 and RAC1"/>
</dbReference>
<dbReference type="Reactome" id="R-MMU-8875656">
    <property type="pathway name" value="MET receptor recycling"/>
</dbReference>
<dbReference type="Reactome" id="R-MMU-9027276">
    <property type="pathway name" value="Erythropoietin activates Phosphoinositide-3-kinase (PI3K)"/>
</dbReference>
<dbReference type="BioGRID-ORCS" id="14388">
    <property type="hits" value="2 hits in 77 CRISPR screens"/>
</dbReference>
<dbReference type="ChiTaRS" id="Gab1">
    <property type="organism name" value="mouse"/>
</dbReference>
<dbReference type="PRO" id="PR:Q9QYY0"/>
<dbReference type="Proteomes" id="UP000000589">
    <property type="component" value="Chromosome 8"/>
</dbReference>
<dbReference type="RNAct" id="Q9QYY0">
    <property type="molecule type" value="protein"/>
</dbReference>
<dbReference type="Bgee" id="ENSMUSG00000031714">
    <property type="expression patterns" value="Expressed in vestibular membrane of cochlear duct and 262 other cell types or tissues"/>
</dbReference>
<dbReference type="ExpressionAtlas" id="Q9QYY0">
    <property type="expression patterns" value="baseline and differential"/>
</dbReference>
<dbReference type="GO" id="GO:0005938">
    <property type="term" value="C:cell cortex"/>
    <property type="evidence" value="ECO:0000316"/>
    <property type="project" value="MGI"/>
</dbReference>
<dbReference type="GO" id="GO:0005737">
    <property type="term" value="C:cytoplasm"/>
    <property type="evidence" value="ECO:0000314"/>
    <property type="project" value="MGI"/>
</dbReference>
<dbReference type="GO" id="GO:0005829">
    <property type="term" value="C:cytosol"/>
    <property type="evidence" value="ECO:0000304"/>
    <property type="project" value="Reactome"/>
</dbReference>
<dbReference type="GO" id="GO:0035591">
    <property type="term" value="F:signaling adaptor activity"/>
    <property type="evidence" value="ECO:0000314"/>
    <property type="project" value="MGI"/>
</dbReference>
<dbReference type="GO" id="GO:0035924">
    <property type="term" value="P:cellular response to vascular endothelial growth factor stimulus"/>
    <property type="evidence" value="ECO:0000314"/>
    <property type="project" value="BHF-UCL"/>
</dbReference>
<dbReference type="GO" id="GO:0007173">
    <property type="term" value="P:epidermal growth factor receptor signaling pathway"/>
    <property type="evidence" value="ECO:0000315"/>
    <property type="project" value="MGI"/>
</dbReference>
<dbReference type="GO" id="GO:0008544">
    <property type="term" value="P:epidermis development"/>
    <property type="evidence" value="ECO:0000315"/>
    <property type="project" value="MGI"/>
</dbReference>
<dbReference type="GO" id="GO:0007507">
    <property type="term" value="P:heart development"/>
    <property type="evidence" value="ECO:0000315"/>
    <property type="project" value="MGI"/>
</dbReference>
<dbReference type="GO" id="GO:0070102">
    <property type="term" value="P:interleukin-6-mediated signaling pathway"/>
    <property type="evidence" value="ECO:0000315"/>
    <property type="project" value="MGI"/>
</dbReference>
<dbReference type="GO" id="GO:0060711">
    <property type="term" value="P:labyrinthine layer development"/>
    <property type="evidence" value="ECO:0000315"/>
    <property type="project" value="MGI"/>
</dbReference>
<dbReference type="GO" id="GO:0000165">
    <property type="term" value="P:MAPK cascade"/>
    <property type="evidence" value="ECO:0000315"/>
    <property type="project" value="MGI"/>
</dbReference>
<dbReference type="GO" id="GO:0048008">
    <property type="term" value="P:platelet-derived growth factor receptor signaling pathway"/>
    <property type="evidence" value="ECO:0000315"/>
    <property type="project" value="MGI"/>
</dbReference>
<dbReference type="GO" id="GO:0043536">
    <property type="term" value="P:positive regulation of blood vessel endothelial cell migration"/>
    <property type="evidence" value="ECO:0000314"/>
    <property type="project" value="BHF-UCL"/>
</dbReference>
<dbReference type="GO" id="GO:0043410">
    <property type="term" value="P:positive regulation of MAPK cascade"/>
    <property type="evidence" value="ECO:0000314"/>
    <property type="project" value="MGI"/>
</dbReference>
<dbReference type="GO" id="GO:0030334">
    <property type="term" value="P:regulation of cell migration"/>
    <property type="evidence" value="ECO:0000316"/>
    <property type="project" value="MGI"/>
</dbReference>
<dbReference type="GO" id="GO:0006979">
    <property type="term" value="P:response to oxidative stress"/>
    <property type="evidence" value="ECO:0000314"/>
    <property type="project" value="MGI"/>
</dbReference>
<dbReference type="GO" id="GO:0007165">
    <property type="term" value="P:signal transduction"/>
    <property type="evidence" value="ECO:0000314"/>
    <property type="project" value="MGI"/>
</dbReference>
<dbReference type="GO" id="GO:0038084">
    <property type="term" value="P:vascular endothelial growth factor signaling pathway"/>
    <property type="evidence" value="ECO:0000314"/>
    <property type="project" value="BHF-UCL"/>
</dbReference>
<dbReference type="CDD" id="cd01266">
    <property type="entry name" value="PH_Gab1_Gab2"/>
    <property type="match status" value="1"/>
</dbReference>
<dbReference type="FunFam" id="2.30.29.30:FF:000166">
    <property type="entry name" value="GRB2-associated-binding protein 1 isoform X1"/>
    <property type="match status" value="1"/>
</dbReference>
<dbReference type="Gene3D" id="2.30.29.30">
    <property type="entry name" value="Pleckstrin-homology domain (PH domain)/Phosphotyrosine-binding domain (PTB)"/>
    <property type="match status" value="1"/>
</dbReference>
<dbReference type="InterPro" id="IPR046355">
    <property type="entry name" value="Gab1-4-like"/>
</dbReference>
<dbReference type="InterPro" id="IPR011993">
    <property type="entry name" value="PH-like_dom_sf"/>
</dbReference>
<dbReference type="InterPro" id="IPR001849">
    <property type="entry name" value="PH_domain"/>
</dbReference>
<dbReference type="PANTHER" id="PTHR45960">
    <property type="entry name" value="GRB2-ASSOCIATED-BINDING PROTEIN"/>
    <property type="match status" value="1"/>
</dbReference>
<dbReference type="PANTHER" id="PTHR45960:SF5">
    <property type="entry name" value="GRB2-ASSOCIATED-BINDING PROTEIN 1"/>
    <property type="match status" value="1"/>
</dbReference>
<dbReference type="Pfam" id="PF00169">
    <property type="entry name" value="PH"/>
    <property type="match status" value="1"/>
</dbReference>
<dbReference type="SMART" id="SM00233">
    <property type="entry name" value="PH"/>
    <property type="match status" value="1"/>
</dbReference>
<dbReference type="SUPFAM" id="SSF50729">
    <property type="entry name" value="PH domain-like"/>
    <property type="match status" value="1"/>
</dbReference>
<dbReference type="PROSITE" id="PS50003">
    <property type="entry name" value="PH_DOMAIN"/>
    <property type="match status" value="1"/>
</dbReference>
<comment type="function">
    <text evidence="2">Adapter protein that plays a role in intracellular signaling cascades triggered by activated receptor-type kinases. Plays a role in FGFR1 signaling. Probably involved in signaling by the epidermal growth factor receptor (EGFR) and the insulin receptor (INSR). Involved in the MET/HGF-signaling pathway.</text>
</comment>
<comment type="subunit">
    <text evidence="2 5">Identified in a complex containing FRS2, GRB2, GAB1, PIK3R1 and SOS1 (PubMed:11353842). Forms a tripartite complex containing GAB1, METTL13 and SPRY2 (By similarity). Within the complex interacts with METTL13 (By similarity). Interacts with GRB2 and with other SH2-containing proteins (PubMed:11353842). Interacts with phosphorylated LAT2 (By similarity). Interacts with PTPRJ (By similarity). Interacts (phosphorylated) with PTPN11 (By similarity). Interacts with HCK (By similarity).</text>
</comment>
<comment type="interaction">
    <interactant intactId="EBI-644784">
        <id>Q9QYY0</id>
    </interactant>
    <interactant intactId="EBI-1688">
        <id>Q60631</id>
        <label>Grb2</label>
    </interactant>
    <organismsDiffer>false</organismsDiffer>
    <experiments>8</experiments>
</comment>
<comment type="tissue specificity">
    <text evidence="6">Expressed in the inner ear (at protein level) (PubMed:29408807). Expression is detected in the cochlear duct, spiral limbus region, efferent and afferent nerves, and in spiral ganglion neurons (at protein level) (PubMed:29408807).</text>
</comment>
<comment type="PTM">
    <text evidence="1 5">Phosphorylated on tyrosine residue(s) by the epidermal growth factor receptor (EGFR) and the insulin receptor (INSR). Tyrosine phosphorylation of GAB1 mediates interaction with several proteins that contain SH2 domains. Phosphorylated on tyrosine residues by HCK upon IL6 signaling (By similarity). Phosphorylated in response to FGFR1 activation.</text>
</comment>
<comment type="similarity">
    <text evidence="7">Belongs to the GAB family.</text>
</comment>
<keyword id="KW-0007">Acetylation</keyword>
<keyword id="KW-0597">Phosphoprotein</keyword>
<keyword id="KW-1185">Reference proteome</keyword>
<evidence type="ECO:0000250" key="1"/>
<evidence type="ECO:0000250" key="2">
    <source>
        <dbReference type="UniProtKB" id="Q13480"/>
    </source>
</evidence>
<evidence type="ECO:0000255" key="3">
    <source>
        <dbReference type="PROSITE-ProRule" id="PRU00145"/>
    </source>
</evidence>
<evidence type="ECO:0000256" key="4">
    <source>
        <dbReference type="SAM" id="MobiDB-lite"/>
    </source>
</evidence>
<evidence type="ECO:0000269" key="5">
    <source>
    </source>
</evidence>
<evidence type="ECO:0000269" key="6">
    <source>
    </source>
</evidence>
<evidence type="ECO:0000305" key="7"/>
<evidence type="ECO:0007744" key="8">
    <source>
    </source>
</evidence>
<protein>
    <recommendedName>
        <fullName>GRB2-associated-binding protein 1</fullName>
    </recommendedName>
    <alternativeName>
        <fullName>GRB2-associated binder 1</fullName>
    </alternativeName>
    <alternativeName>
        <fullName>Growth factor receptor bound protein 2-associated protein 1</fullName>
    </alternativeName>
</protein>
<name>GAB1_MOUSE</name>
<reference key="1">
    <citation type="submission" date="1999-10" db="EMBL/GenBank/DDBJ databases">
        <authorList>
            <person name="Sachs M."/>
        </authorList>
    </citation>
    <scope>NUCLEOTIDE SEQUENCE [MRNA]</scope>
</reference>
<reference key="2">
    <citation type="journal article" date="2004" name="Genome Res.">
        <title>The status, quality, and expansion of the NIH full-length cDNA project: the Mammalian Gene Collection (MGC).</title>
        <authorList>
            <consortium name="The MGC Project Team"/>
        </authorList>
    </citation>
    <scope>NUCLEOTIDE SEQUENCE [LARGE SCALE MRNA]</scope>
    <source>
        <tissue>Mammary tumor</tissue>
    </source>
</reference>
<reference key="3">
    <citation type="journal article" date="2001" name="Proc. Natl. Acad. Sci. U.S.A.">
        <title>Stimulation of phosphatidylinositol 3-kinase by fibroblast growth factor receptors is mediated by coordinated recruitment of multiple docking proteins.</title>
        <authorList>
            <person name="Ong S.H."/>
            <person name="Hadari Y.R."/>
            <person name="Gotoh N."/>
            <person name="Guy G.R."/>
            <person name="Schlessinger J."/>
            <person name="Lax I."/>
        </authorList>
    </citation>
    <scope>PHOSPHORYLATION IN RESPONSE TO FGFR1 SIGNALING</scope>
    <scope>IDENTIFICATION IN A COMPLEX WITH FRS2; GRB2; PIK3R1 AND SOS1</scope>
</reference>
<reference key="4">
    <citation type="journal article" date="2010" name="Cell">
        <title>A tissue-specific atlas of mouse protein phosphorylation and expression.</title>
        <authorList>
            <person name="Huttlin E.L."/>
            <person name="Jedrychowski M.P."/>
            <person name="Elias J.E."/>
            <person name="Goswami T."/>
            <person name="Rad R."/>
            <person name="Beausoleil S.A."/>
            <person name="Villen J."/>
            <person name="Haas W."/>
            <person name="Sowa M.E."/>
            <person name="Gygi S.P."/>
        </authorList>
    </citation>
    <scope>PHOSPHORYLATION [LARGE SCALE ANALYSIS] AT SER-455</scope>
    <scope>IDENTIFICATION BY MASS SPECTROMETRY [LARGE SCALE ANALYSIS]</scope>
    <source>
        <tissue>Heart</tissue>
        <tissue>Lung</tissue>
        <tissue>Testis</tissue>
    </source>
</reference>
<reference key="5">
    <citation type="journal article" date="2010" name="Nat. Rev. Cancer">
        <title>Fibroblast growth factor signalling: from development to cancer.</title>
        <authorList>
            <person name="Turner N."/>
            <person name="Grose R."/>
        </authorList>
    </citation>
    <scope>REVIEW ON FUNCTION IN FGF SIGNALING</scope>
</reference>
<reference key="6">
    <citation type="journal article" date="2018" name="J. Clin. Invest.">
        <title>Modifier variant of METTL13 suppresses human GAB1-associated profound deafness.</title>
        <authorList>
            <person name="Yousaf R."/>
            <person name="Ahmed Z.M."/>
            <person name="Giese A.P."/>
            <person name="Morell R.J."/>
            <person name="Lagziel A."/>
            <person name="Dabdoub A."/>
            <person name="Wilcox E.R."/>
            <person name="Riazuddin S."/>
            <person name="Friedman T.B."/>
            <person name="Riazuddin S."/>
        </authorList>
    </citation>
    <scope>TISSUE SPECIFICITY</scope>
</reference>
<sequence length="695" mass="76812">MSGGEVVCSGWLRKSPPEKKLKRYAWKRRWFVLRSGRLTGDPDVLEYYKNDHAKKPIRIIDLNLCQQVDAGLTFNKKEFENSYIFDINTIDRIFYLVADSEEDMNKWVRCICDICGFNPTEEDPVKPLTGSSQAPVDSPFAISTAPASSQMEASSVALPPPYQVISLPPHPDTLGLQDDPQDYLLLINCQSKKPEPNRTLFDSAKPTFSETDCNDNVPSHQTPASSQSKHGMNGFFQQQMMYDCPPSRLTSVSGESSLYNLPRSYSHDVLPKESPSSTEADGELYTFNTPSGTAGVETQMRHVSISYDIPPTPGNTYQIPRTFPESTLGQSSKLDTIPDIPPPRPPKPHPTHDRSPVETCGVPRTASDTDSSYCIPPPAGMTPSRSNTISTVDLNKLRKDASSQDCYDIPRTFPSDRSSSLEGFHSQYKIKSVLTAGGVSGEELDENYVPMNPNSPPRQHSGSFTEPIQEPNYVPMTPGTFDFSSFGMQVPPPAHMGFRSSPKTPPRRPVPVADCEPPPVDRNLKPDRKVKPAPLDIKPLSEWEELQAPVRSPITRSFARDSSRFPMSPRPDSVHSTTSSSDSHDSEENYVPMNPNLSGEDPNLFASNSLDGGSSPMNKPKGDKQVEYLDLDLDSGKSTPPRKQKSSGSGSSMADERVDYVVVDQQKTLALKSTREAWTDGRQSTESETPTKNVK</sequence>
<organism>
    <name type="scientific">Mus musculus</name>
    <name type="common">Mouse</name>
    <dbReference type="NCBI Taxonomy" id="10090"/>
    <lineage>
        <taxon>Eukaryota</taxon>
        <taxon>Metazoa</taxon>
        <taxon>Chordata</taxon>
        <taxon>Craniata</taxon>
        <taxon>Vertebrata</taxon>
        <taxon>Euteleostomi</taxon>
        <taxon>Mammalia</taxon>
        <taxon>Eutheria</taxon>
        <taxon>Euarchontoglires</taxon>
        <taxon>Glires</taxon>
        <taxon>Rodentia</taxon>
        <taxon>Myomorpha</taxon>
        <taxon>Muroidea</taxon>
        <taxon>Muridae</taxon>
        <taxon>Murinae</taxon>
        <taxon>Mus</taxon>
        <taxon>Mus</taxon>
    </lineage>
</organism>
<proteinExistence type="evidence at protein level"/>
<accession>Q9QYY0</accession>
<accession>Q91VW7</accession>